<dbReference type="EC" id="2.7.1.71" evidence="1"/>
<dbReference type="EMBL" id="CU928160">
    <property type="protein sequence ID" value="CAR00329.1"/>
    <property type="molecule type" value="Genomic_DNA"/>
</dbReference>
<dbReference type="RefSeq" id="WP_000818618.1">
    <property type="nucleotide sequence ID" value="NC_011741.1"/>
</dbReference>
<dbReference type="SMR" id="B7M1U2"/>
<dbReference type="GeneID" id="93778608"/>
<dbReference type="KEGG" id="ecr:ECIAI1_3528"/>
<dbReference type="HOGENOM" id="CLU_057607_2_2_6"/>
<dbReference type="UniPathway" id="UPA00053">
    <property type="reaction ID" value="UER00088"/>
</dbReference>
<dbReference type="GO" id="GO:0005829">
    <property type="term" value="C:cytosol"/>
    <property type="evidence" value="ECO:0007669"/>
    <property type="project" value="TreeGrafter"/>
</dbReference>
<dbReference type="GO" id="GO:0005524">
    <property type="term" value="F:ATP binding"/>
    <property type="evidence" value="ECO:0007669"/>
    <property type="project" value="UniProtKB-UniRule"/>
</dbReference>
<dbReference type="GO" id="GO:0000287">
    <property type="term" value="F:magnesium ion binding"/>
    <property type="evidence" value="ECO:0007669"/>
    <property type="project" value="UniProtKB-UniRule"/>
</dbReference>
<dbReference type="GO" id="GO:0004765">
    <property type="term" value="F:shikimate kinase activity"/>
    <property type="evidence" value="ECO:0007669"/>
    <property type="project" value="UniProtKB-UniRule"/>
</dbReference>
<dbReference type="GO" id="GO:0008652">
    <property type="term" value="P:amino acid biosynthetic process"/>
    <property type="evidence" value="ECO:0007669"/>
    <property type="project" value="UniProtKB-KW"/>
</dbReference>
<dbReference type="GO" id="GO:0009073">
    <property type="term" value="P:aromatic amino acid family biosynthetic process"/>
    <property type="evidence" value="ECO:0007669"/>
    <property type="project" value="UniProtKB-KW"/>
</dbReference>
<dbReference type="GO" id="GO:0009423">
    <property type="term" value="P:chorismate biosynthetic process"/>
    <property type="evidence" value="ECO:0007669"/>
    <property type="project" value="UniProtKB-UniRule"/>
</dbReference>
<dbReference type="CDD" id="cd00464">
    <property type="entry name" value="SK"/>
    <property type="match status" value="1"/>
</dbReference>
<dbReference type="FunFam" id="3.40.50.300:FF:000099">
    <property type="entry name" value="Shikimate kinase 1"/>
    <property type="match status" value="1"/>
</dbReference>
<dbReference type="Gene3D" id="3.40.50.300">
    <property type="entry name" value="P-loop containing nucleotide triphosphate hydrolases"/>
    <property type="match status" value="1"/>
</dbReference>
<dbReference type="HAMAP" id="MF_00109">
    <property type="entry name" value="Shikimate_kinase"/>
    <property type="match status" value="1"/>
</dbReference>
<dbReference type="InterPro" id="IPR027417">
    <property type="entry name" value="P-loop_NTPase"/>
</dbReference>
<dbReference type="InterPro" id="IPR031322">
    <property type="entry name" value="Shikimate/glucono_kinase"/>
</dbReference>
<dbReference type="InterPro" id="IPR000623">
    <property type="entry name" value="Shikimate_kinase/TSH1"/>
</dbReference>
<dbReference type="InterPro" id="IPR023000">
    <property type="entry name" value="Shikimate_kinase_CS"/>
</dbReference>
<dbReference type="NCBIfam" id="NF003456">
    <property type="entry name" value="PRK05057.1"/>
    <property type="match status" value="1"/>
</dbReference>
<dbReference type="PANTHER" id="PTHR21087">
    <property type="entry name" value="SHIKIMATE KINASE"/>
    <property type="match status" value="1"/>
</dbReference>
<dbReference type="PANTHER" id="PTHR21087:SF16">
    <property type="entry name" value="SHIKIMATE KINASE 1, CHLOROPLASTIC"/>
    <property type="match status" value="1"/>
</dbReference>
<dbReference type="Pfam" id="PF01202">
    <property type="entry name" value="SKI"/>
    <property type="match status" value="1"/>
</dbReference>
<dbReference type="PRINTS" id="PR01100">
    <property type="entry name" value="SHIKIMTKNASE"/>
</dbReference>
<dbReference type="SUPFAM" id="SSF52540">
    <property type="entry name" value="P-loop containing nucleoside triphosphate hydrolases"/>
    <property type="match status" value="1"/>
</dbReference>
<dbReference type="PROSITE" id="PS01128">
    <property type="entry name" value="SHIKIMATE_KINASE"/>
    <property type="match status" value="1"/>
</dbReference>
<sequence length="173" mass="19538">MAEKRNIFLVGPMGAGKSTIGRQLAQQLNMEFYDSDQEIEKRTGADVGWVFDLEGEEGFRDREEKVINELTEKQGIVLATGGGSVKSRETRNRLSARGVVVYLETTIEKQLARTQRDKKRPLLHVETPPREVLEALANERNPLYEEIADVTIRTDDQSAKVVANQIIHMLESN</sequence>
<name>AROK_ECO8A</name>
<protein>
    <recommendedName>
        <fullName evidence="1">Shikimate kinase 1</fullName>
        <shortName evidence="1">SK 1</shortName>
        <ecNumber evidence="1">2.7.1.71</ecNumber>
    </recommendedName>
</protein>
<organism>
    <name type="scientific">Escherichia coli O8 (strain IAI1)</name>
    <dbReference type="NCBI Taxonomy" id="585034"/>
    <lineage>
        <taxon>Bacteria</taxon>
        <taxon>Pseudomonadati</taxon>
        <taxon>Pseudomonadota</taxon>
        <taxon>Gammaproteobacteria</taxon>
        <taxon>Enterobacterales</taxon>
        <taxon>Enterobacteriaceae</taxon>
        <taxon>Escherichia</taxon>
    </lineage>
</organism>
<proteinExistence type="inferred from homology"/>
<keyword id="KW-0028">Amino-acid biosynthesis</keyword>
<keyword id="KW-0057">Aromatic amino acid biosynthesis</keyword>
<keyword id="KW-0067">ATP-binding</keyword>
<keyword id="KW-0963">Cytoplasm</keyword>
<keyword id="KW-0418">Kinase</keyword>
<keyword id="KW-0460">Magnesium</keyword>
<keyword id="KW-0479">Metal-binding</keyword>
<keyword id="KW-0547">Nucleotide-binding</keyword>
<keyword id="KW-0808">Transferase</keyword>
<feature type="chain" id="PRO_1000117462" description="Shikimate kinase 1">
    <location>
        <begin position="1"/>
        <end position="173"/>
    </location>
</feature>
<feature type="binding site" evidence="1">
    <location>
        <begin position="14"/>
        <end position="19"/>
    </location>
    <ligand>
        <name>ATP</name>
        <dbReference type="ChEBI" id="CHEBI:30616"/>
    </ligand>
</feature>
<feature type="binding site" evidence="1">
    <location>
        <position position="18"/>
    </location>
    <ligand>
        <name>Mg(2+)</name>
        <dbReference type="ChEBI" id="CHEBI:18420"/>
    </ligand>
</feature>
<feature type="binding site" evidence="1">
    <location>
        <position position="36"/>
    </location>
    <ligand>
        <name>substrate</name>
    </ligand>
</feature>
<feature type="binding site" evidence="1">
    <location>
        <position position="60"/>
    </location>
    <ligand>
        <name>substrate</name>
    </ligand>
</feature>
<feature type="binding site" evidence="1">
    <location>
        <position position="82"/>
    </location>
    <ligand>
        <name>substrate</name>
    </ligand>
</feature>
<feature type="binding site" evidence="1">
    <location>
        <position position="120"/>
    </location>
    <ligand>
        <name>ATP</name>
        <dbReference type="ChEBI" id="CHEBI:30616"/>
    </ligand>
</feature>
<feature type="binding site" evidence="1">
    <location>
        <position position="140"/>
    </location>
    <ligand>
        <name>substrate</name>
    </ligand>
</feature>
<feature type="binding site" evidence="1">
    <location>
        <position position="157"/>
    </location>
    <ligand>
        <name>ATP</name>
        <dbReference type="ChEBI" id="CHEBI:30616"/>
    </ligand>
</feature>
<comment type="function">
    <text evidence="1">Catalyzes the specific phosphorylation of the 3-hydroxyl group of shikimic acid using ATP as a cosubstrate.</text>
</comment>
<comment type="catalytic activity">
    <reaction evidence="1">
        <text>shikimate + ATP = 3-phosphoshikimate + ADP + H(+)</text>
        <dbReference type="Rhea" id="RHEA:13121"/>
        <dbReference type="ChEBI" id="CHEBI:15378"/>
        <dbReference type="ChEBI" id="CHEBI:30616"/>
        <dbReference type="ChEBI" id="CHEBI:36208"/>
        <dbReference type="ChEBI" id="CHEBI:145989"/>
        <dbReference type="ChEBI" id="CHEBI:456216"/>
        <dbReference type="EC" id="2.7.1.71"/>
    </reaction>
</comment>
<comment type="cofactor">
    <cofactor evidence="1">
        <name>Mg(2+)</name>
        <dbReference type="ChEBI" id="CHEBI:18420"/>
    </cofactor>
    <text evidence="1">Binds 1 Mg(2+) ion per subunit.</text>
</comment>
<comment type="pathway">
    <text evidence="1">Metabolic intermediate biosynthesis; chorismate biosynthesis; chorismate from D-erythrose 4-phosphate and phosphoenolpyruvate: step 5/7.</text>
</comment>
<comment type="subunit">
    <text evidence="1">Monomer.</text>
</comment>
<comment type="subcellular location">
    <subcellularLocation>
        <location evidence="1">Cytoplasm</location>
    </subcellularLocation>
</comment>
<comment type="similarity">
    <text evidence="1">Belongs to the shikimate kinase family.</text>
</comment>
<reference key="1">
    <citation type="journal article" date="2009" name="PLoS Genet.">
        <title>Organised genome dynamics in the Escherichia coli species results in highly diverse adaptive paths.</title>
        <authorList>
            <person name="Touchon M."/>
            <person name="Hoede C."/>
            <person name="Tenaillon O."/>
            <person name="Barbe V."/>
            <person name="Baeriswyl S."/>
            <person name="Bidet P."/>
            <person name="Bingen E."/>
            <person name="Bonacorsi S."/>
            <person name="Bouchier C."/>
            <person name="Bouvet O."/>
            <person name="Calteau A."/>
            <person name="Chiapello H."/>
            <person name="Clermont O."/>
            <person name="Cruveiller S."/>
            <person name="Danchin A."/>
            <person name="Diard M."/>
            <person name="Dossat C."/>
            <person name="Karoui M.E."/>
            <person name="Frapy E."/>
            <person name="Garry L."/>
            <person name="Ghigo J.M."/>
            <person name="Gilles A.M."/>
            <person name="Johnson J."/>
            <person name="Le Bouguenec C."/>
            <person name="Lescat M."/>
            <person name="Mangenot S."/>
            <person name="Martinez-Jehanne V."/>
            <person name="Matic I."/>
            <person name="Nassif X."/>
            <person name="Oztas S."/>
            <person name="Petit M.A."/>
            <person name="Pichon C."/>
            <person name="Rouy Z."/>
            <person name="Ruf C.S."/>
            <person name="Schneider D."/>
            <person name="Tourret J."/>
            <person name="Vacherie B."/>
            <person name="Vallenet D."/>
            <person name="Medigue C."/>
            <person name="Rocha E.P.C."/>
            <person name="Denamur E."/>
        </authorList>
    </citation>
    <scope>NUCLEOTIDE SEQUENCE [LARGE SCALE GENOMIC DNA]</scope>
    <source>
        <strain>IAI1</strain>
    </source>
</reference>
<evidence type="ECO:0000255" key="1">
    <source>
        <dbReference type="HAMAP-Rule" id="MF_00109"/>
    </source>
</evidence>
<accession>B7M1U2</accession>
<gene>
    <name evidence="1" type="primary">aroK</name>
    <name type="ordered locus">ECIAI1_3528</name>
</gene>